<keyword id="KW-0687">Ribonucleoprotein</keyword>
<keyword id="KW-0689">Ribosomal protein</keyword>
<reference key="1">
    <citation type="journal article" date="2005" name="Genome Res.">
        <title>Comparative and functional genomic analyses of the pathogenicity of phytopathogen Xanthomonas campestris pv. campestris.</title>
        <authorList>
            <person name="Qian W."/>
            <person name="Jia Y."/>
            <person name="Ren S.-X."/>
            <person name="He Y.-Q."/>
            <person name="Feng J.-X."/>
            <person name="Lu L.-F."/>
            <person name="Sun Q."/>
            <person name="Ying G."/>
            <person name="Tang D.-J."/>
            <person name="Tang H."/>
            <person name="Wu W."/>
            <person name="Hao P."/>
            <person name="Wang L."/>
            <person name="Jiang B.-L."/>
            <person name="Zeng S."/>
            <person name="Gu W.-Y."/>
            <person name="Lu G."/>
            <person name="Rong L."/>
            <person name="Tian Y."/>
            <person name="Yao Z."/>
            <person name="Fu G."/>
            <person name="Chen B."/>
            <person name="Fang R."/>
            <person name="Qiang B."/>
            <person name="Chen Z."/>
            <person name="Zhao G.-P."/>
            <person name="Tang J.-L."/>
            <person name="He C."/>
        </authorList>
    </citation>
    <scope>NUCLEOTIDE SEQUENCE [LARGE SCALE GENOMIC DNA]</scope>
    <source>
        <strain>8004</strain>
    </source>
</reference>
<evidence type="ECO:0000255" key="1">
    <source>
        <dbReference type="HAMAP-Rule" id="MF_00532"/>
    </source>
</evidence>
<evidence type="ECO:0000305" key="2"/>
<proteinExistence type="inferred from homology"/>
<sequence length="130" mass="14504">MAITQNYGTGRRKSSTARVFLRKGTGNITVNNRPLDEFFGRETARMIVRQPLELTKNTESFDILVTASGGGTTGQAGAIRLGIARALVEYDETLKSELRKAGFMTRDAREVERKKVGLHKARRATQFSKR</sequence>
<gene>
    <name evidence="1" type="primary">rpsI</name>
    <name type="ordered locus">XC_0491</name>
</gene>
<feature type="chain" id="PRO_1000051365" description="Small ribosomal subunit protein uS9">
    <location>
        <begin position="1"/>
        <end position="130"/>
    </location>
</feature>
<organism>
    <name type="scientific">Xanthomonas campestris pv. campestris (strain 8004)</name>
    <dbReference type="NCBI Taxonomy" id="314565"/>
    <lineage>
        <taxon>Bacteria</taxon>
        <taxon>Pseudomonadati</taxon>
        <taxon>Pseudomonadota</taxon>
        <taxon>Gammaproteobacteria</taxon>
        <taxon>Lysobacterales</taxon>
        <taxon>Lysobacteraceae</taxon>
        <taxon>Xanthomonas</taxon>
    </lineage>
</organism>
<dbReference type="EMBL" id="CP000050">
    <property type="protein sequence ID" value="AAY47572.1"/>
    <property type="molecule type" value="Genomic_DNA"/>
</dbReference>
<dbReference type="RefSeq" id="WP_011035728.1">
    <property type="nucleotide sequence ID" value="NZ_CP155948.1"/>
</dbReference>
<dbReference type="SMR" id="Q4UZF1"/>
<dbReference type="GeneID" id="58011789"/>
<dbReference type="KEGG" id="xcb:XC_0491"/>
<dbReference type="HOGENOM" id="CLU_046483_2_1_6"/>
<dbReference type="Proteomes" id="UP000000420">
    <property type="component" value="Chromosome"/>
</dbReference>
<dbReference type="GO" id="GO:0022627">
    <property type="term" value="C:cytosolic small ribosomal subunit"/>
    <property type="evidence" value="ECO:0007669"/>
    <property type="project" value="TreeGrafter"/>
</dbReference>
<dbReference type="GO" id="GO:0003723">
    <property type="term" value="F:RNA binding"/>
    <property type="evidence" value="ECO:0007669"/>
    <property type="project" value="TreeGrafter"/>
</dbReference>
<dbReference type="GO" id="GO:0003735">
    <property type="term" value="F:structural constituent of ribosome"/>
    <property type="evidence" value="ECO:0007669"/>
    <property type="project" value="InterPro"/>
</dbReference>
<dbReference type="GO" id="GO:0006412">
    <property type="term" value="P:translation"/>
    <property type="evidence" value="ECO:0007669"/>
    <property type="project" value="UniProtKB-UniRule"/>
</dbReference>
<dbReference type="FunFam" id="3.30.230.10:FF:000001">
    <property type="entry name" value="30S ribosomal protein S9"/>
    <property type="match status" value="1"/>
</dbReference>
<dbReference type="Gene3D" id="3.30.230.10">
    <property type="match status" value="1"/>
</dbReference>
<dbReference type="HAMAP" id="MF_00532_B">
    <property type="entry name" value="Ribosomal_uS9_B"/>
    <property type="match status" value="1"/>
</dbReference>
<dbReference type="InterPro" id="IPR020568">
    <property type="entry name" value="Ribosomal_Su5_D2-typ_SF"/>
</dbReference>
<dbReference type="InterPro" id="IPR000754">
    <property type="entry name" value="Ribosomal_uS9"/>
</dbReference>
<dbReference type="InterPro" id="IPR023035">
    <property type="entry name" value="Ribosomal_uS9_bac/plastid"/>
</dbReference>
<dbReference type="InterPro" id="IPR020574">
    <property type="entry name" value="Ribosomal_uS9_CS"/>
</dbReference>
<dbReference type="InterPro" id="IPR014721">
    <property type="entry name" value="Ribsml_uS5_D2-typ_fold_subgr"/>
</dbReference>
<dbReference type="NCBIfam" id="NF001099">
    <property type="entry name" value="PRK00132.1"/>
    <property type="match status" value="1"/>
</dbReference>
<dbReference type="PANTHER" id="PTHR21569">
    <property type="entry name" value="RIBOSOMAL PROTEIN S9"/>
    <property type="match status" value="1"/>
</dbReference>
<dbReference type="PANTHER" id="PTHR21569:SF1">
    <property type="entry name" value="SMALL RIBOSOMAL SUBUNIT PROTEIN US9M"/>
    <property type="match status" value="1"/>
</dbReference>
<dbReference type="Pfam" id="PF00380">
    <property type="entry name" value="Ribosomal_S9"/>
    <property type="match status" value="1"/>
</dbReference>
<dbReference type="SUPFAM" id="SSF54211">
    <property type="entry name" value="Ribosomal protein S5 domain 2-like"/>
    <property type="match status" value="1"/>
</dbReference>
<dbReference type="PROSITE" id="PS00360">
    <property type="entry name" value="RIBOSOMAL_S9"/>
    <property type="match status" value="1"/>
</dbReference>
<protein>
    <recommendedName>
        <fullName evidence="1">Small ribosomal subunit protein uS9</fullName>
    </recommendedName>
    <alternativeName>
        <fullName evidence="2">30S ribosomal protein S9</fullName>
    </alternativeName>
</protein>
<name>RS9_XANC8</name>
<comment type="similarity">
    <text evidence="1">Belongs to the universal ribosomal protein uS9 family.</text>
</comment>
<accession>Q4UZF1</accession>